<name>AZOR1_BACHK</name>
<dbReference type="EC" id="1.6.5.-" evidence="1"/>
<dbReference type="EC" id="1.7.1.17" evidence="1"/>
<dbReference type="EMBL" id="AE017355">
    <property type="protein sequence ID" value="AAT63363.1"/>
    <property type="molecule type" value="Genomic_DNA"/>
</dbReference>
<dbReference type="RefSeq" id="YP_036082.1">
    <property type="nucleotide sequence ID" value="NC_005957.1"/>
</dbReference>
<dbReference type="SMR" id="Q6HK44"/>
<dbReference type="KEGG" id="btk:BT9727_1750"/>
<dbReference type="PATRIC" id="fig|281309.8.peg.1843"/>
<dbReference type="HOGENOM" id="CLU_088964_3_1_9"/>
<dbReference type="Proteomes" id="UP000001301">
    <property type="component" value="Chromosome"/>
</dbReference>
<dbReference type="GO" id="GO:0009055">
    <property type="term" value="F:electron transfer activity"/>
    <property type="evidence" value="ECO:0007669"/>
    <property type="project" value="UniProtKB-UniRule"/>
</dbReference>
<dbReference type="GO" id="GO:0010181">
    <property type="term" value="F:FMN binding"/>
    <property type="evidence" value="ECO:0007669"/>
    <property type="project" value="UniProtKB-UniRule"/>
</dbReference>
<dbReference type="GO" id="GO:0016652">
    <property type="term" value="F:oxidoreductase activity, acting on NAD(P)H as acceptor"/>
    <property type="evidence" value="ECO:0007669"/>
    <property type="project" value="UniProtKB-UniRule"/>
</dbReference>
<dbReference type="GO" id="GO:0016655">
    <property type="term" value="F:oxidoreductase activity, acting on NAD(P)H, quinone or similar compound as acceptor"/>
    <property type="evidence" value="ECO:0007669"/>
    <property type="project" value="InterPro"/>
</dbReference>
<dbReference type="Gene3D" id="3.40.50.360">
    <property type="match status" value="1"/>
</dbReference>
<dbReference type="HAMAP" id="MF_01216">
    <property type="entry name" value="Azoreductase_type1"/>
    <property type="match status" value="1"/>
</dbReference>
<dbReference type="InterPro" id="IPR003680">
    <property type="entry name" value="Flavodoxin_fold"/>
</dbReference>
<dbReference type="InterPro" id="IPR029039">
    <property type="entry name" value="Flavoprotein-like_sf"/>
</dbReference>
<dbReference type="InterPro" id="IPR050104">
    <property type="entry name" value="FMN-dep_NADH:Q_OxRdtase_AzoR1"/>
</dbReference>
<dbReference type="InterPro" id="IPR023048">
    <property type="entry name" value="NADH:quinone_OxRdtase_FMN_depd"/>
</dbReference>
<dbReference type="NCBIfam" id="NF010074">
    <property type="entry name" value="PRK13555.1"/>
    <property type="match status" value="1"/>
</dbReference>
<dbReference type="NCBIfam" id="NF010075">
    <property type="entry name" value="PRK13556.1"/>
    <property type="match status" value="1"/>
</dbReference>
<dbReference type="PANTHER" id="PTHR43741">
    <property type="entry name" value="FMN-DEPENDENT NADH-AZOREDUCTASE 1"/>
    <property type="match status" value="1"/>
</dbReference>
<dbReference type="PANTHER" id="PTHR43741:SF4">
    <property type="entry name" value="FMN-DEPENDENT NADH:QUINONE OXIDOREDUCTASE"/>
    <property type="match status" value="1"/>
</dbReference>
<dbReference type="Pfam" id="PF02525">
    <property type="entry name" value="Flavodoxin_2"/>
    <property type="match status" value="1"/>
</dbReference>
<dbReference type="SUPFAM" id="SSF52218">
    <property type="entry name" value="Flavoproteins"/>
    <property type="match status" value="1"/>
</dbReference>
<protein>
    <recommendedName>
        <fullName evidence="1">FMN-dependent NADH:quinone oxidoreductase 1</fullName>
        <ecNumber evidence="1">1.6.5.-</ecNumber>
    </recommendedName>
    <alternativeName>
        <fullName evidence="1">Azo-dye reductase 1</fullName>
    </alternativeName>
    <alternativeName>
        <fullName evidence="1">FMN-dependent NADH-azo compound oxidoreductase 1</fullName>
    </alternativeName>
    <alternativeName>
        <fullName evidence="1">FMN-dependent NADH-azoreductase 1</fullName>
        <ecNumber evidence="1">1.7.1.17</ecNumber>
    </alternativeName>
</protein>
<feature type="chain" id="PRO_0000245891" description="FMN-dependent NADH:quinone oxidoreductase 1">
    <location>
        <begin position="1"/>
        <end position="208"/>
    </location>
</feature>
<accession>Q6HK44</accession>
<keyword id="KW-0285">Flavoprotein</keyword>
<keyword id="KW-0288">FMN</keyword>
<keyword id="KW-0520">NAD</keyword>
<keyword id="KW-0560">Oxidoreductase</keyword>
<proteinExistence type="inferred from homology"/>
<organism>
    <name type="scientific">Bacillus thuringiensis subsp. konkukian (strain 97-27)</name>
    <dbReference type="NCBI Taxonomy" id="281309"/>
    <lineage>
        <taxon>Bacteria</taxon>
        <taxon>Bacillati</taxon>
        <taxon>Bacillota</taxon>
        <taxon>Bacilli</taxon>
        <taxon>Bacillales</taxon>
        <taxon>Bacillaceae</taxon>
        <taxon>Bacillus</taxon>
        <taxon>Bacillus cereus group</taxon>
    </lineage>
</organism>
<sequence length="208" mass="23023">MSKVLFVKANDRPAEQAVSSKMYETFVNTYKEANPNTEITELDLFALDLPYYGNIAISGGYKRSQGMELTAEEEKAVATVDQYLNQFLEADKVVFAFPLWNFTVPAPLITYISYLSQAGKTFKYTANGPEGLAGGKKVVVLGARGSDYSSEQMAPMEMAVNYVTTVLGFWGITNPETVVIEGHNQYPDRSQQIVEEGLENVKKVAAKF</sequence>
<reference key="1">
    <citation type="journal article" date="2006" name="J. Bacteriol.">
        <title>Pathogenomic sequence analysis of Bacillus cereus and Bacillus thuringiensis isolates closely related to Bacillus anthracis.</title>
        <authorList>
            <person name="Han C.S."/>
            <person name="Xie G."/>
            <person name="Challacombe J.F."/>
            <person name="Altherr M.R."/>
            <person name="Bhotika S.S."/>
            <person name="Bruce D."/>
            <person name="Campbell C.S."/>
            <person name="Campbell M.L."/>
            <person name="Chen J."/>
            <person name="Chertkov O."/>
            <person name="Cleland C."/>
            <person name="Dimitrijevic M."/>
            <person name="Doggett N.A."/>
            <person name="Fawcett J.J."/>
            <person name="Glavina T."/>
            <person name="Goodwin L.A."/>
            <person name="Hill K.K."/>
            <person name="Hitchcock P."/>
            <person name="Jackson P.J."/>
            <person name="Keim P."/>
            <person name="Kewalramani A.R."/>
            <person name="Longmire J."/>
            <person name="Lucas S."/>
            <person name="Malfatti S."/>
            <person name="McMurry K."/>
            <person name="Meincke L.J."/>
            <person name="Misra M."/>
            <person name="Moseman B.L."/>
            <person name="Mundt M."/>
            <person name="Munk A.C."/>
            <person name="Okinaka R.T."/>
            <person name="Parson-Quintana B."/>
            <person name="Reilly L.P."/>
            <person name="Richardson P."/>
            <person name="Robinson D.L."/>
            <person name="Rubin E."/>
            <person name="Saunders E."/>
            <person name="Tapia R."/>
            <person name="Tesmer J.G."/>
            <person name="Thayer N."/>
            <person name="Thompson L.S."/>
            <person name="Tice H."/>
            <person name="Ticknor L.O."/>
            <person name="Wills P.L."/>
            <person name="Brettin T.S."/>
            <person name="Gilna P."/>
        </authorList>
    </citation>
    <scope>NUCLEOTIDE SEQUENCE [LARGE SCALE GENOMIC DNA]</scope>
    <source>
        <strain>97-27</strain>
    </source>
</reference>
<comment type="function">
    <text evidence="1">Quinone reductase that provides resistance to thiol-specific stress caused by electrophilic quinones.</text>
</comment>
<comment type="function">
    <text evidence="1">Also exhibits azoreductase activity. Catalyzes the reductive cleavage of the azo bond in aromatic azo compounds to the corresponding amines.</text>
</comment>
<comment type="catalytic activity">
    <reaction evidence="1">
        <text>2 a quinone + NADH + H(+) = 2 a 1,4-benzosemiquinone + NAD(+)</text>
        <dbReference type="Rhea" id="RHEA:65952"/>
        <dbReference type="ChEBI" id="CHEBI:15378"/>
        <dbReference type="ChEBI" id="CHEBI:57540"/>
        <dbReference type="ChEBI" id="CHEBI:57945"/>
        <dbReference type="ChEBI" id="CHEBI:132124"/>
        <dbReference type="ChEBI" id="CHEBI:134225"/>
    </reaction>
</comment>
<comment type="catalytic activity">
    <reaction evidence="1">
        <text>N,N-dimethyl-1,4-phenylenediamine + anthranilate + 2 NAD(+) = 2-(4-dimethylaminophenyl)diazenylbenzoate + 2 NADH + 2 H(+)</text>
        <dbReference type="Rhea" id="RHEA:55872"/>
        <dbReference type="ChEBI" id="CHEBI:15378"/>
        <dbReference type="ChEBI" id="CHEBI:15783"/>
        <dbReference type="ChEBI" id="CHEBI:16567"/>
        <dbReference type="ChEBI" id="CHEBI:57540"/>
        <dbReference type="ChEBI" id="CHEBI:57945"/>
        <dbReference type="ChEBI" id="CHEBI:71579"/>
        <dbReference type="EC" id="1.7.1.17"/>
    </reaction>
</comment>
<comment type="cofactor">
    <cofactor evidence="1">
        <name>FMN</name>
        <dbReference type="ChEBI" id="CHEBI:58210"/>
    </cofactor>
    <text evidence="1">Binds 1 FMN per subunit.</text>
</comment>
<comment type="subunit">
    <text evidence="1">Homodimer.</text>
</comment>
<comment type="similarity">
    <text evidence="1">Belongs to the azoreductase type 1 family.</text>
</comment>
<evidence type="ECO:0000255" key="1">
    <source>
        <dbReference type="HAMAP-Rule" id="MF_01216"/>
    </source>
</evidence>
<gene>
    <name evidence="1" type="primary">azoR1</name>
    <name type="ordered locus">BT9727_1750</name>
</gene>